<accession>Q0VAM2</accession>
<accession>Q0VAM1</accession>
<accession>Q4W5L7</accession>
<accession>Q4W5M3</accession>
<accession>Q96MY8</accession>
<name>RGF1B_HUMAN</name>
<comment type="function">
    <text evidence="5 6">Guanine nucleotide exchange factor (GEF) with specificity for RAP2A, it doesn't seems to activate other Ras family proteins (in vitro).</text>
</comment>
<comment type="subunit">
    <text evidence="1 6">Interacts with Ras family proteins (By similarity). Interacts with CCDC124 during cytokinesis.</text>
</comment>
<comment type="interaction">
    <interactant intactId="EBI-12013954">
        <id>Q0VAM2-3</id>
    </interactant>
    <interactant intactId="EBI-741542">
        <id>Q9UIF8</id>
        <label>BAZ2B</label>
    </interactant>
    <organismsDiffer>false</organismsDiffer>
    <experiments>3</experiments>
</comment>
<comment type="interaction">
    <interactant intactId="EBI-12013954">
        <id>Q0VAM2-3</id>
    </interactant>
    <interactant intactId="EBI-350517">
        <id>Q9NR12</id>
        <label>PDLIM7</label>
    </interactant>
    <organismsDiffer>false</organismsDiffer>
    <experiments>3</experiments>
</comment>
<comment type="interaction">
    <interactant intactId="EBI-12013954">
        <id>Q0VAM2-3</id>
    </interactant>
    <interactant intactId="EBI-742388">
        <id>Q9H8W4</id>
        <label>PLEKHF2</label>
    </interactant>
    <organismsDiffer>false</organismsDiffer>
    <experiments>3</experiments>
</comment>
<comment type="interaction">
    <interactant intactId="EBI-12013954">
        <id>Q0VAM2-3</id>
    </interactant>
    <interactant intactId="EBI-10241197">
        <id>Q3SY00</id>
        <label>TSGA10IP</label>
    </interactant>
    <organismsDiffer>false</organismsDiffer>
    <experiments>3</experiments>
</comment>
<comment type="subcellular location">
    <subcellularLocation>
        <location evidence="1">Early endosome</location>
    </subcellularLocation>
    <subcellularLocation>
        <location evidence="1">Late endosome</location>
    </subcellularLocation>
    <subcellularLocation>
        <location evidence="6">Midbody</location>
    </subcellularLocation>
    <text evidence="1">May shuttle between early and late endosomes (By similarity). Localizes to midbody at telophase.</text>
</comment>
<comment type="alternative products">
    <event type="alternative splicing"/>
    <isoform>
        <id>Q0VAM2-1</id>
        <name>1</name>
        <sequence type="displayed"/>
    </isoform>
    <isoform>
        <id>Q0VAM2-2</id>
        <name>2</name>
        <sequence type="described" ref="VSP_027313 VSP_027314"/>
    </isoform>
    <isoform>
        <id>Q0VAM2-3</id>
        <name>3</name>
        <sequence type="described" ref="VSP_027314"/>
    </isoform>
</comment>
<comment type="induction">
    <text evidence="4">Up-regulated in macrophages stimulated with IFNG, GPI-mucins or bacterial lipopolysaccharides (LPS).</text>
</comment>
<gene>
    <name type="primary">RASGEF1B</name>
    <name type="synonym">GPIG4</name>
</gene>
<keyword id="KW-0025">Alternative splicing</keyword>
<keyword id="KW-0967">Endosome</keyword>
<keyword id="KW-0344">Guanine-nucleotide releasing factor</keyword>
<keyword id="KW-1267">Proteomics identification</keyword>
<keyword id="KW-1185">Reference proteome</keyword>
<proteinExistence type="evidence at protein level"/>
<evidence type="ECO:0000250" key="1"/>
<evidence type="ECO:0000255" key="2">
    <source>
        <dbReference type="PROSITE-ProRule" id="PRU00135"/>
    </source>
</evidence>
<evidence type="ECO:0000255" key="3">
    <source>
        <dbReference type="PROSITE-ProRule" id="PRU00168"/>
    </source>
</evidence>
<evidence type="ECO:0000269" key="4">
    <source>
    </source>
</evidence>
<evidence type="ECO:0000269" key="5">
    <source>
    </source>
</evidence>
<evidence type="ECO:0000269" key="6">
    <source>
    </source>
</evidence>
<evidence type="ECO:0000303" key="7">
    <source>
    </source>
</evidence>
<organism>
    <name type="scientific">Homo sapiens</name>
    <name type="common">Human</name>
    <dbReference type="NCBI Taxonomy" id="9606"/>
    <lineage>
        <taxon>Eukaryota</taxon>
        <taxon>Metazoa</taxon>
        <taxon>Chordata</taxon>
        <taxon>Craniata</taxon>
        <taxon>Vertebrata</taxon>
        <taxon>Euteleostomi</taxon>
        <taxon>Mammalia</taxon>
        <taxon>Eutheria</taxon>
        <taxon>Euarchontoglires</taxon>
        <taxon>Primates</taxon>
        <taxon>Haplorrhini</taxon>
        <taxon>Catarrhini</taxon>
        <taxon>Hominidae</taxon>
        <taxon>Homo</taxon>
    </lineage>
</organism>
<protein>
    <recommendedName>
        <fullName>Ras-GEF domain-containing family member 1B</fullName>
    </recommendedName>
    <alternativeName>
        <fullName>GPI gamma-4</fullName>
    </alternativeName>
</protein>
<sequence length="473" mass="55359">MPQTPPFSAMFDSSGYNRNLYQSAEDSCGGLYYHDNNLLSGSLEALIQHLVPNVDYYPDRTYIFTFLLSSRLFMHPYELMAKVCHLCVEHQRLSDPDSDKNQMRKIAPKILQLLTEWTETFPYDFRDERMMRNLKDLAHRIASGEEQTYRKNVQQMMQCLIRKLAALSQYEEVLAKISSTSTDRLTVLKTKPQSIQRDIITVCNDPYTLAQQLTHIELERLNYIGPEEFVQAFVQKDPLDNDKSCYSERKKTRNLEAYVEWFNRLSYLVATEICMPVKKKHRARMIEYFIDVARECFNIGNFNSLMAIISGMNMSPVSRLKKTWAKVKTAKFDILEHQMDPSSNFYNYRTALRGAAQRSLTAHSSREKIVIPFFSLLIKDIYFLNEGCANRLPNGHVNFEKFWELAKQVSEFMTWKQVECPFERDRKILQYLLTVPVFSEDALYLASYESEGPENHIEKDRWKSLRSSLLGRV</sequence>
<feature type="chain" id="PRO_0000297638" description="Ras-GEF domain-containing family member 1B">
    <location>
        <begin position="1"/>
        <end position="473"/>
    </location>
</feature>
<feature type="domain" description="N-terminal Ras-GEF" evidence="2">
    <location>
        <begin position="34"/>
        <end position="164"/>
    </location>
</feature>
<feature type="domain" description="Ras-GEF" evidence="3">
    <location>
        <begin position="204"/>
        <end position="452"/>
    </location>
</feature>
<feature type="splice variant" id="VSP_027313" description="In isoform 2." evidence="7">
    <location>
        <begin position="60"/>
        <end position="100"/>
    </location>
</feature>
<feature type="splice variant" id="VSP_027314" description="In isoform 2 and isoform 3." evidence="7">
    <location>
        <position position="147"/>
    </location>
</feature>
<reference key="1">
    <citation type="journal article" date="2004" name="Nat. Genet.">
        <title>Complete sequencing and characterization of 21,243 full-length human cDNAs.</title>
        <authorList>
            <person name="Ota T."/>
            <person name="Suzuki Y."/>
            <person name="Nishikawa T."/>
            <person name="Otsuki T."/>
            <person name="Sugiyama T."/>
            <person name="Irie R."/>
            <person name="Wakamatsu A."/>
            <person name="Hayashi K."/>
            <person name="Sato H."/>
            <person name="Nagai K."/>
            <person name="Kimura K."/>
            <person name="Makita H."/>
            <person name="Sekine M."/>
            <person name="Obayashi M."/>
            <person name="Nishi T."/>
            <person name="Shibahara T."/>
            <person name="Tanaka T."/>
            <person name="Ishii S."/>
            <person name="Yamamoto J."/>
            <person name="Saito K."/>
            <person name="Kawai Y."/>
            <person name="Isono Y."/>
            <person name="Nakamura Y."/>
            <person name="Nagahari K."/>
            <person name="Murakami K."/>
            <person name="Yasuda T."/>
            <person name="Iwayanagi T."/>
            <person name="Wagatsuma M."/>
            <person name="Shiratori A."/>
            <person name="Sudo H."/>
            <person name="Hosoiri T."/>
            <person name="Kaku Y."/>
            <person name="Kodaira H."/>
            <person name="Kondo H."/>
            <person name="Sugawara M."/>
            <person name="Takahashi M."/>
            <person name="Kanda K."/>
            <person name="Yokoi T."/>
            <person name="Furuya T."/>
            <person name="Kikkawa E."/>
            <person name="Omura Y."/>
            <person name="Abe K."/>
            <person name="Kamihara K."/>
            <person name="Katsuta N."/>
            <person name="Sato K."/>
            <person name="Tanikawa M."/>
            <person name="Yamazaki M."/>
            <person name="Ninomiya K."/>
            <person name="Ishibashi T."/>
            <person name="Yamashita H."/>
            <person name="Murakawa K."/>
            <person name="Fujimori K."/>
            <person name="Tanai H."/>
            <person name="Kimata M."/>
            <person name="Watanabe M."/>
            <person name="Hiraoka S."/>
            <person name="Chiba Y."/>
            <person name="Ishida S."/>
            <person name="Ono Y."/>
            <person name="Takiguchi S."/>
            <person name="Watanabe S."/>
            <person name="Yosida M."/>
            <person name="Hotuta T."/>
            <person name="Kusano J."/>
            <person name="Kanehori K."/>
            <person name="Takahashi-Fujii A."/>
            <person name="Hara H."/>
            <person name="Tanase T.-O."/>
            <person name="Nomura Y."/>
            <person name="Togiya S."/>
            <person name="Komai F."/>
            <person name="Hara R."/>
            <person name="Takeuchi K."/>
            <person name="Arita M."/>
            <person name="Imose N."/>
            <person name="Musashino K."/>
            <person name="Yuuki H."/>
            <person name="Oshima A."/>
            <person name="Sasaki N."/>
            <person name="Aotsuka S."/>
            <person name="Yoshikawa Y."/>
            <person name="Matsunawa H."/>
            <person name="Ichihara T."/>
            <person name="Shiohata N."/>
            <person name="Sano S."/>
            <person name="Moriya S."/>
            <person name="Momiyama H."/>
            <person name="Satoh N."/>
            <person name="Takami S."/>
            <person name="Terashima Y."/>
            <person name="Suzuki O."/>
            <person name="Nakagawa S."/>
            <person name="Senoh A."/>
            <person name="Mizoguchi H."/>
            <person name="Goto Y."/>
            <person name="Shimizu F."/>
            <person name="Wakebe H."/>
            <person name="Hishigaki H."/>
            <person name="Watanabe T."/>
            <person name="Sugiyama A."/>
            <person name="Takemoto M."/>
            <person name="Kawakami B."/>
            <person name="Yamazaki M."/>
            <person name="Watanabe K."/>
            <person name="Kumagai A."/>
            <person name="Itakura S."/>
            <person name="Fukuzumi Y."/>
            <person name="Fujimori Y."/>
            <person name="Komiyama M."/>
            <person name="Tashiro H."/>
            <person name="Tanigami A."/>
            <person name="Fujiwara T."/>
            <person name="Ono T."/>
            <person name="Yamada K."/>
            <person name="Fujii Y."/>
            <person name="Ozaki K."/>
            <person name="Hirao M."/>
            <person name="Ohmori Y."/>
            <person name="Kawabata A."/>
            <person name="Hikiji T."/>
            <person name="Kobatake N."/>
            <person name="Inagaki H."/>
            <person name="Ikema Y."/>
            <person name="Okamoto S."/>
            <person name="Okitani R."/>
            <person name="Kawakami T."/>
            <person name="Noguchi S."/>
            <person name="Itoh T."/>
            <person name="Shigeta K."/>
            <person name="Senba T."/>
            <person name="Matsumura K."/>
            <person name="Nakajima Y."/>
            <person name="Mizuno T."/>
            <person name="Morinaga M."/>
            <person name="Sasaki M."/>
            <person name="Togashi T."/>
            <person name="Oyama M."/>
            <person name="Hata H."/>
            <person name="Watanabe M."/>
            <person name="Komatsu T."/>
            <person name="Mizushima-Sugano J."/>
            <person name="Satoh T."/>
            <person name="Shirai Y."/>
            <person name="Takahashi Y."/>
            <person name="Nakagawa K."/>
            <person name="Okumura K."/>
            <person name="Nagase T."/>
            <person name="Nomura N."/>
            <person name="Kikuchi H."/>
            <person name="Masuho Y."/>
            <person name="Yamashita R."/>
            <person name="Nakai K."/>
            <person name="Yada T."/>
            <person name="Nakamura Y."/>
            <person name="Ohara O."/>
            <person name="Isogai T."/>
            <person name="Sugano S."/>
        </authorList>
    </citation>
    <scope>NUCLEOTIDE SEQUENCE [LARGE SCALE MRNA] (ISOFORM 1)</scope>
    <source>
        <tissue>Teratocarcinoma</tissue>
    </source>
</reference>
<reference key="2">
    <citation type="journal article" date="2005" name="Nature">
        <title>Generation and annotation of the DNA sequences of human chromosomes 2 and 4.</title>
        <authorList>
            <person name="Hillier L.W."/>
            <person name="Graves T.A."/>
            <person name="Fulton R.S."/>
            <person name="Fulton L.A."/>
            <person name="Pepin K.H."/>
            <person name="Minx P."/>
            <person name="Wagner-McPherson C."/>
            <person name="Layman D."/>
            <person name="Wylie K."/>
            <person name="Sekhon M."/>
            <person name="Becker M.C."/>
            <person name="Fewell G.A."/>
            <person name="Delehaunty K.D."/>
            <person name="Miner T.L."/>
            <person name="Nash W.E."/>
            <person name="Kremitzki C."/>
            <person name="Oddy L."/>
            <person name="Du H."/>
            <person name="Sun H."/>
            <person name="Bradshaw-Cordum H."/>
            <person name="Ali J."/>
            <person name="Carter J."/>
            <person name="Cordes M."/>
            <person name="Harris A."/>
            <person name="Isak A."/>
            <person name="van Brunt A."/>
            <person name="Nguyen C."/>
            <person name="Du F."/>
            <person name="Courtney L."/>
            <person name="Kalicki J."/>
            <person name="Ozersky P."/>
            <person name="Abbott S."/>
            <person name="Armstrong J."/>
            <person name="Belter E.A."/>
            <person name="Caruso L."/>
            <person name="Cedroni M."/>
            <person name="Cotton M."/>
            <person name="Davidson T."/>
            <person name="Desai A."/>
            <person name="Elliott G."/>
            <person name="Erb T."/>
            <person name="Fronick C."/>
            <person name="Gaige T."/>
            <person name="Haakenson W."/>
            <person name="Haglund K."/>
            <person name="Holmes A."/>
            <person name="Harkins R."/>
            <person name="Kim K."/>
            <person name="Kruchowski S.S."/>
            <person name="Strong C.M."/>
            <person name="Grewal N."/>
            <person name="Goyea E."/>
            <person name="Hou S."/>
            <person name="Levy A."/>
            <person name="Martinka S."/>
            <person name="Mead K."/>
            <person name="McLellan M.D."/>
            <person name="Meyer R."/>
            <person name="Randall-Maher J."/>
            <person name="Tomlinson C."/>
            <person name="Dauphin-Kohlberg S."/>
            <person name="Kozlowicz-Reilly A."/>
            <person name="Shah N."/>
            <person name="Swearengen-Shahid S."/>
            <person name="Snider J."/>
            <person name="Strong J.T."/>
            <person name="Thompson J."/>
            <person name="Yoakum M."/>
            <person name="Leonard S."/>
            <person name="Pearman C."/>
            <person name="Trani L."/>
            <person name="Radionenko M."/>
            <person name="Waligorski J.E."/>
            <person name="Wang C."/>
            <person name="Rock S.M."/>
            <person name="Tin-Wollam A.-M."/>
            <person name="Maupin R."/>
            <person name="Latreille P."/>
            <person name="Wendl M.C."/>
            <person name="Yang S.-P."/>
            <person name="Pohl C."/>
            <person name="Wallis J.W."/>
            <person name="Spieth J."/>
            <person name="Bieri T.A."/>
            <person name="Berkowicz N."/>
            <person name="Nelson J.O."/>
            <person name="Osborne J."/>
            <person name="Ding L."/>
            <person name="Meyer R."/>
            <person name="Sabo A."/>
            <person name="Shotland Y."/>
            <person name="Sinha P."/>
            <person name="Wohldmann P.E."/>
            <person name="Cook L.L."/>
            <person name="Hickenbotham M.T."/>
            <person name="Eldred J."/>
            <person name="Williams D."/>
            <person name="Jones T.A."/>
            <person name="She X."/>
            <person name="Ciccarelli F.D."/>
            <person name="Izaurralde E."/>
            <person name="Taylor J."/>
            <person name="Schmutz J."/>
            <person name="Myers R.M."/>
            <person name="Cox D.R."/>
            <person name="Huang X."/>
            <person name="McPherson J.D."/>
            <person name="Mardis E.R."/>
            <person name="Clifton S.W."/>
            <person name="Warren W.C."/>
            <person name="Chinwalla A.T."/>
            <person name="Eddy S.R."/>
            <person name="Marra M.A."/>
            <person name="Ovcharenko I."/>
            <person name="Furey T.S."/>
            <person name="Miller W."/>
            <person name="Eichler E.E."/>
            <person name="Bork P."/>
            <person name="Suyama M."/>
            <person name="Torrents D."/>
            <person name="Waterston R.H."/>
            <person name="Wilson R.K."/>
        </authorList>
    </citation>
    <scope>NUCLEOTIDE SEQUENCE [LARGE SCALE GENOMIC DNA]</scope>
</reference>
<reference key="3">
    <citation type="journal article" date="2004" name="Genome Res.">
        <title>The status, quality, and expansion of the NIH full-length cDNA project: the Mammalian Gene Collection (MGC).</title>
        <authorList>
            <consortium name="The MGC Project Team"/>
        </authorList>
    </citation>
    <scope>NUCLEOTIDE SEQUENCE [LARGE SCALE MRNA] (ISOFORMS 2 AND 3)</scope>
</reference>
<reference key="4">
    <citation type="journal article" date="2002" name="J. Leukoc. Biol.">
        <title>Identification and characterization of a novel mouse gene encoding a Ras-associated guanine nucleotide exchange factor: expression in macrophages and myocarditis elicited by Trypanosoma cruzi parasites.</title>
        <authorList>
            <person name="Ferreira L.R.P."/>
            <person name="Abrantes E.F."/>
            <person name="Rodrigues C.V."/>
            <person name="Caetano B."/>
            <person name="Cerqueira G.C."/>
            <person name="Salim A.C."/>
            <person name="Reis L.F.L."/>
            <person name="Gazzinelli R.T."/>
        </authorList>
    </citation>
    <scope>INDUCTION</scope>
</reference>
<reference key="5">
    <citation type="journal article" date="2009" name="FEBS J.">
        <title>RasGEF1A and RasGEF1B are guanine nucleotide exchange factors that discriminate between Rap GTP-binding proteins and mediate Rap2-specific nucleotide exchange.</title>
        <authorList>
            <person name="Yaman E."/>
            <person name="Gasper R."/>
            <person name="Koerner C."/>
            <person name="Wittinghofer A."/>
            <person name="Tazebay U.H."/>
        </authorList>
    </citation>
    <scope>FUNCTION</scope>
</reference>
<reference key="6">
    <citation type="journal article" date="2013" name="PLoS ONE">
        <title>Coiled-coil domain containing protein 124 is a novel centrosome and midbody protein that interacts with the ras-guanine nucleotide exchange factor 1B and is involved in cytokinesis.</title>
        <authorList>
            <person name="Telkoparan P."/>
            <person name="Erkek S."/>
            <person name="Yaman E."/>
            <person name="Alotaibi H."/>
            <person name="Bayik D."/>
            <person name="Tazebay U.H."/>
        </authorList>
    </citation>
    <scope>FUNCTION</scope>
    <scope>SUBCELLULAR LOCATION</scope>
    <scope>INTERACTION WITH CCDC124</scope>
</reference>
<dbReference type="EMBL" id="AK056257">
    <property type="protein sequence ID" value="BAB71130.1"/>
    <property type="molecule type" value="mRNA"/>
</dbReference>
<dbReference type="EMBL" id="AC006287">
    <property type="status" value="NOT_ANNOTATED_CDS"/>
    <property type="molecule type" value="Genomic_DNA"/>
</dbReference>
<dbReference type="EMBL" id="AC093747">
    <property type="protein sequence ID" value="AAY40982.1"/>
    <property type="molecule type" value="Genomic_DNA"/>
</dbReference>
<dbReference type="EMBL" id="AC093618">
    <property type="protein sequence ID" value="AAY41054.1"/>
    <property type="molecule type" value="Genomic_DNA"/>
</dbReference>
<dbReference type="EMBL" id="BC121003">
    <property type="protein sequence ID" value="AAI21004.1"/>
    <property type="molecule type" value="mRNA"/>
</dbReference>
<dbReference type="EMBL" id="BC121004">
    <property type="protein sequence ID" value="AAI21005.1"/>
    <property type="molecule type" value="mRNA"/>
</dbReference>
<dbReference type="CCDS" id="CCDS34022.1">
    <molecule id="Q0VAM2-1"/>
</dbReference>
<dbReference type="CCDS" id="CCDS75151.1">
    <molecule id="Q0VAM2-2"/>
</dbReference>
<dbReference type="CCDS" id="CCDS75152.1">
    <molecule id="Q0VAM2-3"/>
</dbReference>
<dbReference type="RefSeq" id="NP_001287664.1">
    <molecule id="Q0VAM2-3"/>
    <property type="nucleotide sequence ID" value="NM_001300735.2"/>
</dbReference>
<dbReference type="RefSeq" id="NP_001287665.1">
    <molecule id="Q0VAM2-2"/>
    <property type="nucleotide sequence ID" value="NM_001300736.2"/>
</dbReference>
<dbReference type="RefSeq" id="NP_689758.1">
    <molecule id="Q0VAM2-1"/>
    <property type="nucleotide sequence ID" value="NM_152545.3"/>
</dbReference>
<dbReference type="RefSeq" id="XP_016863302.1">
    <property type="nucleotide sequence ID" value="XM_017007813.1"/>
</dbReference>
<dbReference type="SMR" id="Q0VAM2"/>
<dbReference type="BioGRID" id="127476">
    <property type="interactions" value="11"/>
</dbReference>
<dbReference type="FunCoup" id="Q0VAM2">
    <property type="interactions" value="888"/>
</dbReference>
<dbReference type="IntAct" id="Q0VAM2">
    <property type="interactions" value="6"/>
</dbReference>
<dbReference type="STRING" id="9606.ENSP00000264400"/>
<dbReference type="iPTMnet" id="Q0VAM2"/>
<dbReference type="PhosphoSitePlus" id="Q0VAM2"/>
<dbReference type="BioMuta" id="RASGEF1B"/>
<dbReference type="DMDM" id="156633611"/>
<dbReference type="jPOST" id="Q0VAM2"/>
<dbReference type="MassIVE" id="Q0VAM2"/>
<dbReference type="PaxDb" id="9606-ENSP00000264400"/>
<dbReference type="PeptideAtlas" id="Q0VAM2"/>
<dbReference type="Antibodypedia" id="25022">
    <property type="antibodies" value="78 antibodies from 20 providers"/>
</dbReference>
<dbReference type="DNASU" id="153020"/>
<dbReference type="Ensembl" id="ENST00000264400.7">
    <molecule id="Q0VAM2-1"/>
    <property type="protein sequence ID" value="ENSP00000264400.2"/>
    <property type="gene ID" value="ENSG00000138670.19"/>
</dbReference>
<dbReference type="Ensembl" id="ENST00000335927.11">
    <molecule id="Q0VAM2-2"/>
    <property type="protein sequence ID" value="ENSP00000338437.7"/>
    <property type="gene ID" value="ENSG00000138670.19"/>
</dbReference>
<dbReference type="Ensembl" id="ENST00000509081.5">
    <molecule id="Q0VAM2-3"/>
    <property type="protein sequence ID" value="ENSP00000425393.1"/>
    <property type="gene ID" value="ENSG00000138670.19"/>
</dbReference>
<dbReference type="GeneID" id="153020"/>
<dbReference type="KEGG" id="hsa:153020"/>
<dbReference type="MANE-Select" id="ENST00000264400.7">
    <property type="protein sequence ID" value="ENSP00000264400.2"/>
    <property type="RefSeq nucleotide sequence ID" value="NM_152545.3"/>
    <property type="RefSeq protein sequence ID" value="NP_689758.1"/>
</dbReference>
<dbReference type="UCSC" id="uc003hmi.2">
    <molecule id="Q0VAM2-1"/>
    <property type="organism name" value="human"/>
</dbReference>
<dbReference type="AGR" id="HGNC:24881"/>
<dbReference type="CTD" id="153020"/>
<dbReference type="DisGeNET" id="153020"/>
<dbReference type="GeneCards" id="RASGEF1B"/>
<dbReference type="HGNC" id="HGNC:24881">
    <property type="gene designation" value="RASGEF1B"/>
</dbReference>
<dbReference type="HPA" id="ENSG00000138670">
    <property type="expression patterns" value="Tissue enhanced (liver)"/>
</dbReference>
<dbReference type="MIM" id="614532">
    <property type="type" value="gene"/>
</dbReference>
<dbReference type="neXtProt" id="NX_Q0VAM2"/>
<dbReference type="OpenTargets" id="ENSG00000138670"/>
<dbReference type="PharmGKB" id="PA134927621"/>
<dbReference type="VEuPathDB" id="HostDB:ENSG00000138670"/>
<dbReference type="eggNOG" id="KOG3417">
    <property type="taxonomic scope" value="Eukaryota"/>
</dbReference>
<dbReference type="eggNOG" id="KOG3541">
    <property type="taxonomic scope" value="Eukaryota"/>
</dbReference>
<dbReference type="GeneTree" id="ENSGT00940000155816"/>
<dbReference type="InParanoid" id="Q0VAM2"/>
<dbReference type="OMA" id="TWAKVQS"/>
<dbReference type="OrthoDB" id="20825at2759"/>
<dbReference type="PAN-GO" id="Q0VAM2">
    <property type="GO annotations" value="4 GO annotations based on evolutionary models"/>
</dbReference>
<dbReference type="PhylomeDB" id="Q0VAM2"/>
<dbReference type="TreeFam" id="TF313379"/>
<dbReference type="PathwayCommons" id="Q0VAM2"/>
<dbReference type="SignaLink" id="Q0VAM2"/>
<dbReference type="SIGNOR" id="Q0VAM2"/>
<dbReference type="BioGRID-ORCS" id="153020">
    <property type="hits" value="11 hits in 1145 CRISPR screens"/>
</dbReference>
<dbReference type="ChiTaRS" id="RASGEF1B">
    <property type="organism name" value="human"/>
</dbReference>
<dbReference type="GenomeRNAi" id="153020"/>
<dbReference type="Pharos" id="Q0VAM2">
    <property type="development level" value="Tbio"/>
</dbReference>
<dbReference type="PRO" id="PR:Q0VAM2"/>
<dbReference type="Proteomes" id="UP000005640">
    <property type="component" value="Chromosome 4"/>
</dbReference>
<dbReference type="RNAct" id="Q0VAM2">
    <property type="molecule type" value="protein"/>
</dbReference>
<dbReference type="Bgee" id="ENSG00000138670">
    <property type="expression patterns" value="Expressed in ganglionic eminence and 99 other cell types or tissues"/>
</dbReference>
<dbReference type="ExpressionAtlas" id="Q0VAM2">
    <property type="expression patterns" value="baseline and differential"/>
</dbReference>
<dbReference type="GO" id="GO:0005769">
    <property type="term" value="C:early endosome"/>
    <property type="evidence" value="ECO:0007669"/>
    <property type="project" value="UniProtKB-SubCell"/>
</dbReference>
<dbReference type="GO" id="GO:0005770">
    <property type="term" value="C:late endosome"/>
    <property type="evidence" value="ECO:0007669"/>
    <property type="project" value="UniProtKB-SubCell"/>
</dbReference>
<dbReference type="GO" id="GO:0030496">
    <property type="term" value="C:midbody"/>
    <property type="evidence" value="ECO:0007669"/>
    <property type="project" value="UniProtKB-SubCell"/>
</dbReference>
<dbReference type="GO" id="GO:0005886">
    <property type="term" value="C:plasma membrane"/>
    <property type="evidence" value="ECO:0000318"/>
    <property type="project" value="GO_Central"/>
</dbReference>
<dbReference type="GO" id="GO:0005085">
    <property type="term" value="F:guanyl-nucleotide exchange factor activity"/>
    <property type="evidence" value="ECO:0000314"/>
    <property type="project" value="UniProtKB"/>
</dbReference>
<dbReference type="GO" id="GO:0007265">
    <property type="term" value="P:Ras protein signal transduction"/>
    <property type="evidence" value="ECO:0000318"/>
    <property type="project" value="GO_Central"/>
</dbReference>
<dbReference type="CDD" id="cd00155">
    <property type="entry name" value="RasGEF"/>
    <property type="match status" value="1"/>
</dbReference>
<dbReference type="CDD" id="cd06224">
    <property type="entry name" value="REM"/>
    <property type="match status" value="1"/>
</dbReference>
<dbReference type="FunFam" id="1.10.840.10:FF:000008">
    <property type="entry name" value="Ras-GEF domain-containing family member 1B"/>
    <property type="match status" value="1"/>
</dbReference>
<dbReference type="FunFam" id="1.20.870.10:FF:000007">
    <property type="entry name" value="Ras-GEF domain-containing family member 1B"/>
    <property type="match status" value="1"/>
</dbReference>
<dbReference type="Gene3D" id="1.10.840.10">
    <property type="entry name" value="Ras guanine-nucleotide exchange factors catalytic domain"/>
    <property type="match status" value="1"/>
</dbReference>
<dbReference type="Gene3D" id="1.20.870.10">
    <property type="entry name" value="Son of sevenless (SoS) protein Chain: S domain 1"/>
    <property type="match status" value="1"/>
</dbReference>
<dbReference type="InterPro" id="IPR008937">
    <property type="entry name" value="Ras-like_GEF"/>
</dbReference>
<dbReference type="InterPro" id="IPR000651">
    <property type="entry name" value="Ras-like_Gua-exchang_fac_N"/>
</dbReference>
<dbReference type="InterPro" id="IPR019804">
    <property type="entry name" value="Ras_G-nucl-exch_fac_CS"/>
</dbReference>
<dbReference type="InterPro" id="IPR023578">
    <property type="entry name" value="Ras_GEF_dom_sf"/>
</dbReference>
<dbReference type="InterPro" id="IPR001895">
    <property type="entry name" value="RASGEF_cat_dom"/>
</dbReference>
<dbReference type="InterPro" id="IPR036964">
    <property type="entry name" value="RASGEF_cat_dom_sf"/>
</dbReference>
<dbReference type="PANTHER" id="PTHR23113">
    <property type="entry name" value="GUANINE NUCLEOTIDE EXCHANGE FACTOR"/>
    <property type="match status" value="1"/>
</dbReference>
<dbReference type="PANTHER" id="PTHR23113:SF197">
    <property type="entry name" value="RAS-GEF DOMAIN-CONTAINING FAMILY MEMBER 1B"/>
    <property type="match status" value="1"/>
</dbReference>
<dbReference type="Pfam" id="PF00617">
    <property type="entry name" value="RasGEF"/>
    <property type="match status" value="1"/>
</dbReference>
<dbReference type="Pfam" id="PF00618">
    <property type="entry name" value="RasGEF_N"/>
    <property type="match status" value="1"/>
</dbReference>
<dbReference type="SMART" id="SM00147">
    <property type="entry name" value="RasGEF"/>
    <property type="match status" value="1"/>
</dbReference>
<dbReference type="SMART" id="SM00229">
    <property type="entry name" value="RasGEFN"/>
    <property type="match status" value="1"/>
</dbReference>
<dbReference type="SUPFAM" id="SSF48366">
    <property type="entry name" value="Ras GEF"/>
    <property type="match status" value="1"/>
</dbReference>
<dbReference type="PROSITE" id="PS00720">
    <property type="entry name" value="RASGEF"/>
    <property type="match status" value="1"/>
</dbReference>
<dbReference type="PROSITE" id="PS50009">
    <property type="entry name" value="RASGEF_CAT"/>
    <property type="match status" value="1"/>
</dbReference>
<dbReference type="PROSITE" id="PS50212">
    <property type="entry name" value="RASGEF_NTER"/>
    <property type="match status" value="1"/>
</dbReference>